<keyword id="KW-0150">Chloroplast</keyword>
<keyword id="KW-0934">Plastid</keyword>
<keyword id="KW-0687">Ribonucleoprotein</keyword>
<keyword id="KW-0689">Ribosomal protein</keyword>
<keyword id="KW-0694">RNA-binding</keyword>
<keyword id="KW-0699">rRNA-binding</keyword>
<protein>
    <recommendedName>
        <fullName evidence="2">Small ribosomal subunit protein uS7cz/uS7cy</fullName>
    </recommendedName>
    <alternativeName>
        <fullName>30S ribosomal protein S7, chloroplastic</fullName>
    </alternativeName>
</protein>
<comment type="function">
    <text evidence="1">One of the primary rRNA binding proteins, it binds directly to 16S rRNA where it nucleates assembly of the head domain of the 30S subunit.</text>
</comment>
<comment type="subunit">
    <text>Part of the 30S ribosomal subunit.</text>
</comment>
<comment type="subcellular location">
    <subcellularLocation>
        <location>Plastid</location>
        <location>Chloroplast</location>
    </subcellularLocation>
</comment>
<comment type="similarity">
    <text evidence="3">Belongs to the universal ribosomal protein uS7 family.</text>
</comment>
<evidence type="ECO:0000250" key="1"/>
<evidence type="ECO:0000255" key="2">
    <source>
        <dbReference type="HAMAP-Rule" id="MF_00480"/>
    </source>
</evidence>
<evidence type="ECO:0000305" key="3"/>
<proteinExistence type="inferred from homology"/>
<sequence length="155" mass="17386">MSRRGTAEKKTAKSDPIYRNRLVNMLVNRILKHGKKSLAYQIIYRAVKKIQQKTETNPLSVLRQAIRGVTPDITVKARRVGGSTHQVPIEIGSTQGKALAIRWLLAASRKRPGRNMAFKLSSELVDAAKGSGDAIRKKEETHRMAEANRAFAHFR</sequence>
<feature type="chain" id="PRO_0000124430" description="Small ribosomal subunit protein uS7cz/uS7cy">
    <location>
        <begin position="1"/>
        <end position="155"/>
    </location>
</feature>
<name>RR7_ATRBE</name>
<dbReference type="EMBL" id="AJ316582">
    <property type="protein sequence ID" value="CAC88105.1"/>
    <property type="molecule type" value="Genomic_DNA"/>
</dbReference>
<dbReference type="EMBL" id="AJ316582">
    <property type="protein sequence ID" value="CAC88090.1"/>
    <property type="molecule type" value="Genomic_DNA"/>
</dbReference>
<dbReference type="SMR" id="P62729"/>
<dbReference type="GO" id="GO:0009507">
    <property type="term" value="C:chloroplast"/>
    <property type="evidence" value="ECO:0007669"/>
    <property type="project" value="UniProtKB-SubCell"/>
</dbReference>
<dbReference type="GO" id="GO:0015935">
    <property type="term" value="C:small ribosomal subunit"/>
    <property type="evidence" value="ECO:0007669"/>
    <property type="project" value="InterPro"/>
</dbReference>
<dbReference type="GO" id="GO:0019843">
    <property type="term" value="F:rRNA binding"/>
    <property type="evidence" value="ECO:0007669"/>
    <property type="project" value="UniProtKB-UniRule"/>
</dbReference>
<dbReference type="GO" id="GO:0003735">
    <property type="term" value="F:structural constituent of ribosome"/>
    <property type="evidence" value="ECO:0007669"/>
    <property type="project" value="InterPro"/>
</dbReference>
<dbReference type="GO" id="GO:0006412">
    <property type="term" value="P:translation"/>
    <property type="evidence" value="ECO:0007669"/>
    <property type="project" value="UniProtKB-UniRule"/>
</dbReference>
<dbReference type="CDD" id="cd14871">
    <property type="entry name" value="uS7_Chloroplast"/>
    <property type="match status" value="1"/>
</dbReference>
<dbReference type="FunFam" id="1.10.455.10:FF:000001">
    <property type="entry name" value="30S ribosomal protein S7"/>
    <property type="match status" value="1"/>
</dbReference>
<dbReference type="Gene3D" id="1.10.455.10">
    <property type="entry name" value="Ribosomal protein S7 domain"/>
    <property type="match status" value="1"/>
</dbReference>
<dbReference type="HAMAP" id="MF_00480_B">
    <property type="entry name" value="Ribosomal_uS7_B"/>
    <property type="match status" value="1"/>
</dbReference>
<dbReference type="InterPro" id="IPR000235">
    <property type="entry name" value="Ribosomal_uS7"/>
</dbReference>
<dbReference type="InterPro" id="IPR005717">
    <property type="entry name" value="Ribosomal_uS7_bac/org-type"/>
</dbReference>
<dbReference type="InterPro" id="IPR020606">
    <property type="entry name" value="Ribosomal_uS7_CS"/>
</dbReference>
<dbReference type="InterPro" id="IPR023798">
    <property type="entry name" value="Ribosomal_uS7_dom"/>
</dbReference>
<dbReference type="InterPro" id="IPR036823">
    <property type="entry name" value="Ribosomal_uS7_dom_sf"/>
</dbReference>
<dbReference type="NCBIfam" id="TIGR01029">
    <property type="entry name" value="rpsG_bact"/>
    <property type="match status" value="1"/>
</dbReference>
<dbReference type="PANTHER" id="PTHR11205">
    <property type="entry name" value="RIBOSOMAL PROTEIN S7"/>
    <property type="match status" value="1"/>
</dbReference>
<dbReference type="Pfam" id="PF00177">
    <property type="entry name" value="Ribosomal_S7"/>
    <property type="match status" value="1"/>
</dbReference>
<dbReference type="PIRSF" id="PIRSF002122">
    <property type="entry name" value="RPS7p_RPS7a_RPS5e_RPS7o"/>
    <property type="match status" value="1"/>
</dbReference>
<dbReference type="SUPFAM" id="SSF47973">
    <property type="entry name" value="Ribosomal protein S7"/>
    <property type="match status" value="1"/>
</dbReference>
<dbReference type="PROSITE" id="PS00052">
    <property type="entry name" value="RIBOSOMAL_S7"/>
    <property type="match status" value="1"/>
</dbReference>
<accession>P62729</accession>
<accession>P06361</accession>
<organism>
    <name type="scientific">Atropa belladonna</name>
    <name type="common">Belladonna</name>
    <name type="synonym">Deadly nightshade</name>
    <dbReference type="NCBI Taxonomy" id="33113"/>
    <lineage>
        <taxon>Eukaryota</taxon>
        <taxon>Viridiplantae</taxon>
        <taxon>Streptophyta</taxon>
        <taxon>Embryophyta</taxon>
        <taxon>Tracheophyta</taxon>
        <taxon>Spermatophyta</taxon>
        <taxon>Magnoliopsida</taxon>
        <taxon>eudicotyledons</taxon>
        <taxon>Gunneridae</taxon>
        <taxon>Pentapetalae</taxon>
        <taxon>asterids</taxon>
        <taxon>lamiids</taxon>
        <taxon>Solanales</taxon>
        <taxon>Solanaceae</taxon>
        <taxon>Solanoideae</taxon>
        <taxon>Hyoscyameae</taxon>
        <taxon>Atropa</taxon>
    </lineage>
</organism>
<gene>
    <name type="primary">rps7-A</name>
</gene>
<gene>
    <name type="primary">rps7-B</name>
</gene>
<reference key="1">
    <citation type="journal article" date="2002" name="Mol. Biol. Evol.">
        <title>The plastid chromosome of Atropa belladonna and its comparison with that of Nicotiana tabacum: the role of RNA editing in generating divergence in the process of plant speciation.</title>
        <authorList>
            <person name="Schmitz-Linneweber C."/>
            <person name="Regel R."/>
            <person name="Du T.G."/>
            <person name="Hupfer H."/>
            <person name="Herrmann R.G."/>
            <person name="Maier R.M."/>
        </authorList>
    </citation>
    <scope>NUCLEOTIDE SEQUENCE [LARGE SCALE GENOMIC DNA]</scope>
    <source>
        <strain>cv. Ab5p(kan)</strain>
    </source>
</reference>
<geneLocation type="chloroplast"/>